<sequence>MAFSGTWQVYAQENYEEFLRAISLPEDVIKLAKDVKPVTEIQQTGNDFVITSKTPGKSVTNSFTIGKEAEITTMDGRKLKCIVKLEGGKLISETEKFSHKQEIKGGEMIETLTVAGTTMVRKSKKV</sequence>
<dbReference type="SMR" id="P80856"/>
<dbReference type="iPTMnet" id="P80856"/>
<dbReference type="GO" id="GO:0005737">
    <property type="term" value="C:cytoplasm"/>
    <property type="evidence" value="ECO:0007669"/>
    <property type="project" value="UniProtKB-SubCell"/>
</dbReference>
<dbReference type="GO" id="GO:0008289">
    <property type="term" value="F:lipid binding"/>
    <property type="evidence" value="ECO:0007669"/>
    <property type="project" value="UniProtKB-KW"/>
</dbReference>
<dbReference type="CDD" id="cd19447">
    <property type="entry name" value="L-BABP-like"/>
    <property type="match status" value="1"/>
</dbReference>
<dbReference type="FunFam" id="2.40.128.20:FF:000006">
    <property type="entry name" value="Fatty acid-binding protein, liver"/>
    <property type="match status" value="1"/>
</dbReference>
<dbReference type="Gene3D" id="2.40.128.20">
    <property type="match status" value="1"/>
</dbReference>
<dbReference type="InterPro" id="IPR012674">
    <property type="entry name" value="Calycin"/>
</dbReference>
<dbReference type="InterPro" id="IPR000463">
    <property type="entry name" value="Fatty_acid-bd"/>
</dbReference>
<dbReference type="InterPro" id="IPR031259">
    <property type="entry name" value="ILBP"/>
</dbReference>
<dbReference type="PANTHER" id="PTHR11955">
    <property type="entry name" value="FATTY ACID BINDING PROTEIN"/>
    <property type="match status" value="1"/>
</dbReference>
<dbReference type="Pfam" id="PF14651">
    <property type="entry name" value="Lipocalin_7"/>
    <property type="match status" value="1"/>
</dbReference>
<dbReference type="PRINTS" id="PR00178">
    <property type="entry name" value="FATTYACIDBP"/>
</dbReference>
<dbReference type="SUPFAM" id="SSF50814">
    <property type="entry name" value="Lipocalins"/>
    <property type="match status" value="1"/>
</dbReference>
<dbReference type="PROSITE" id="PS00214">
    <property type="entry name" value="FABP"/>
    <property type="match status" value="1"/>
</dbReference>
<name>FABPL_RHASA</name>
<organism>
    <name type="scientific">Rhamdia sapo</name>
    <name type="common">South American catfish</name>
    <dbReference type="NCBI Taxonomy" id="55673"/>
    <lineage>
        <taxon>Eukaryota</taxon>
        <taxon>Metazoa</taxon>
        <taxon>Chordata</taxon>
        <taxon>Craniata</taxon>
        <taxon>Vertebrata</taxon>
        <taxon>Euteleostomi</taxon>
        <taxon>Actinopterygii</taxon>
        <taxon>Neopterygii</taxon>
        <taxon>Teleostei</taxon>
        <taxon>Ostariophysi</taxon>
        <taxon>Siluriformes</taxon>
        <taxon>Pimelodidae</taxon>
        <taxon>Rhamdia</taxon>
    </lineage>
</organism>
<proteinExistence type="evidence at protein level"/>
<comment type="function">
    <text>Binds free fatty acids and their coenzyme A derivatives, bilirubin, and some other small molecules in the cytoplasm. May be involved in intracellular lipid transport this L-FABP binds only one fatty acid/molecule. Has more affinity for trans-parinaric acid than for cis-parinaric acid.</text>
</comment>
<comment type="subcellular location">
    <subcellularLocation>
        <location>Cytoplasm</location>
    </subcellularLocation>
</comment>
<comment type="tissue specificity">
    <text>Liver.</text>
</comment>
<comment type="domain">
    <text evidence="1">Forms a beta-barrel structure that accommodates hydrophobic ligands in its interior.</text>
</comment>
<comment type="similarity">
    <text evidence="3">Belongs to the calycin superfamily. Fatty-acid binding protein (FABP) family.</text>
</comment>
<protein>
    <recommendedName>
        <fullName>Fatty acid-binding protein, liver</fullName>
    </recommendedName>
    <alternativeName>
        <fullName>Fatty acid-binding protein 1</fullName>
    </alternativeName>
    <alternativeName>
        <fullName>Liver basic FABP</fullName>
        <shortName>LB-FABP</shortName>
    </alternativeName>
    <alternativeName>
        <fullName>Liver-type fatty acid-binding protein</fullName>
        <shortName>L-FABP</shortName>
    </alternativeName>
</protein>
<reference key="1">
    <citation type="journal article" date="1997" name="Eur. J. Biochem.">
        <title>Amino acid sequence, binding properties and evolutionary relationships of the basic liver fatty-acid-binding protein from the catfish Rhamdia sapo.</title>
        <authorList>
            <person name="Di Pietro S.M."/>
            <person name="Dell'Angelica E.C."/>
            <person name="Veerkamp J.H."/>
            <person name="Sterin-Speziale N."/>
            <person name="Santome J.A."/>
        </authorList>
    </citation>
    <scope>PROTEIN SEQUENCE OF 2-126</scope>
    <scope>ACETYLATION AT ALA-2</scope>
    <source>
        <tissue>Liver</tissue>
    </source>
</reference>
<reference key="2">
    <citation type="journal article" date="1996" name="Comp. Biochem. Physiol.">
        <title>Purification and structural characterization of a fatty acid-binding protein from the liver of the catfish Rhamdia sapo.</title>
        <authorList>
            <person name="Di Pietro S.M."/>
            <person name="Dell'Angelica E.C."/>
            <person name="Schleicher C.H."/>
            <person name="Santome J.A."/>
        </authorList>
    </citation>
    <scope>PROTEIN SEQUENCE OF 34-53; 58-78 AND 97-122</scope>
    <scope>CHARACTERIZATION</scope>
    <source>
        <tissue>Liver</tissue>
    </source>
</reference>
<accession>P80856</accession>
<evidence type="ECO:0000250" key="1"/>
<evidence type="ECO:0000269" key="2">
    <source>
    </source>
</evidence>
<evidence type="ECO:0000305" key="3"/>
<gene>
    <name type="primary">fabp1</name>
</gene>
<feature type="initiator methionine" description="Removed" evidence="2">
    <location>
        <position position="1"/>
    </location>
</feature>
<feature type="chain" id="PRO_0000067341" description="Fatty acid-binding protein, liver">
    <location>
        <begin position="2"/>
        <end position="126"/>
    </location>
</feature>
<feature type="modified residue" description="N-acetylalanine" evidence="2">
    <location>
        <position position="2"/>
    </location>
</feature>
<keyword id="KW-0007">Acetylation</keyword>
<keyword id="KW-0963">Cytoplasm</keyword>
<keyword id="KW-0903">Direct protein sequencing</keyword>
<keyword id="KW-0446">Lipid-binding</keyword>
<keyword id="KW-0813">Transport</keyword>